<comment type="function">
    <text evidence="1">Probably acts as an electrical shunt for an outwardly-directed proton pump that is linked to amino acid decarboxylation, as part of the extreme acid resistance (XAR) response.</text>
</comment>
<comment type="subcellular location">
    <subcellularLocation>
        <location evidence="1">Cell inner membrane</location>
        <topology evidence="1">Multi-pass membrane protein</topology>
    </subcellularLocation>
</comment>
<comment type="similarity">
    <text evidence="1">Belongs to the chloride channel (TC 2.A.49) family. ClcB subfamily.</text>
</comment>
<sequence length="418" mass="44172">MFRRLLIATVVGILAAFAVAGFRHAMLLLEWLFLNNDSGSLVNAATNLSPWRRLLTPALGGLAAGLLLMGWQKFTQQRPHAPTDYMEALQTDGQFDYAASLVKSLASLLVVTSGSAIGREGAMILLAALAASCFAQRFTPRQEWKLWIACGAAAGMAAAYRAPLAGSLFIAEVLFGTMMLASLGPVIISAVVALLVSNLINHSDALLYNVQLSVTVQARDYALIISTGVLAGLCGPLLLTLMNACHRGFVSLKLAPPWQLALGGLIVGLLSLFTPAVWGNGYSTVQSFLTAPPLLMIIAGIFLCKLCAVLASSGSGAPGGVFTPTLFIGLAIGMLYGRSLGLWFPDGEEITLLLGLTGMATLLAATTHAPIMSTLMICEMTGEYQLLPGLLIACVIASVISRTLHRDSIYRQHTAQHS</sequence>
<feature type="chain" id="PRO_1000085517" description="Voltage-gated ClC-type chloride channel ClcB">
    <location>
        <begin position="1"/>
        <end position="418"/>
    </location>
</feature>
<feature type="transmembrane region" description="Helical" evidence="1">
    <location>
        <begin position="5"/>
        <end position="25"/>
    </location>
</feature>
<feature type="transmembrane region" description="Helical" evidence="1">
    <location>
        <begin position="54"/>
        <end position="74"/>
    </location>
</feature>
<feature type="transmembrane region" description="Helical" evidence="1">
    <location>
        <begin position="146"/>
        <end position="166"/>
    </location>
</feature>
<feature type="transmembrane region" description="Helical" evidence="1">
    <location>
        <begin position="168"/>
        <end position="188"/>
    </location>
</feature>
<feature type="transmembrane region" description="Helical" evidence="1">
    <location>
        <begin position="222"/>
        <end position="242"/>
    </location>
</feature>
<feature type="transmembrane region" description="Helical" evidence="1">
    <location>
        <begin position="258"/>
        <end position="278"/>
    </location>
</feature>
<feature type="transmembrane region" description="Helical" evidence="1">
    <location>
        <begin position="291"/>
        <end position="311"/>
    </location>
</feature>
<feature type="transmembrane region" description="Helical" evidence="1">
    <location>
        <begin position="316"/>
        <end position="336"/>
    </location>
</feature>
<feature type="transmembrane region" description="Helical" evidence="1">
    <location>
        <begin position="352"/>
        <end position="372"/>
    </location>
</feature>
<feature type="transmembrane region" description="Helical" evidence="1">
    <location>
        <begin position="380"/>
        <end position="400"/>
    </location>
</feature>
<protein>
    <recommendedName>
        <fullName evidence="1">Voltage-gated ClC-type chloride channel ClcB</fullName>
    </recommendedName>
</protein>
<name>CLCB_ECOLC</name>
<keyword id="KW-0997">Cell inner membrane</keyword>
<keyword id="KW-1003">Cell membrane</keyword>
<keyword id="KW-0868">Chloride</keyword>
<keyword id="KW-0869">Chloride channel</keyword>
<keyword id="KW-0407">Ion channel</keyword>
<keyword id="KW-0406">Ion transport</keyword>
<keyword id="KW-0472">Membrane</keyword>
<keyword id="KW-0812">Transmembrane</keyword>
<keyword id="KW-1133">Transmembrane helix</keyword>
<keyword id="KW-0813">Transport</keyword>
<keyword id="KW-0851">Voltage-gated channel</keyword>
<gene>
    <name evidence="1" type="primary">clcB</name>
    <name type="ordered locus">EcolC_2038</name>
</gene>
<reference key="1">
    <citation type="submission" date="2008-02" db="EMBL/GenBank/DDBJ databases">
        <title>Complete sequence of Escherichia coli C str. ATCC 8739.</title>
        <authorList>
            <person name="Copeland A."/>
            <person name="Lucas S."/>
            <person name="Lapidus A."/>
            <person name="Glavina del Rio T."/>
            <person name="Dalin E."/>
            <person name="Tice H."/>
            <person name="Bruce D."/>
            <person name="Goodwin L."/>
            <person name="Pitluck S."/>
            <person name="Kiss H."/>
            <person name="Brettin T."/>
            <person name="Detter J.C."/>
            <person name="Han C."/>
            <person name="Kuske C.R."/>
            <person name="Schmutz J."/>
            <person name="Larimer F."/>
            <person name="Land M."/>
            <person name="Hauser L."/>
            <person name="Kyrpides N."/>
            <person name="Mikhailova N."/>
            <person name="Ingram L."/>
            <person name="Richardson P."/>
        </authorList>
    </citation>
    <scope>NUCLEOTIDE SEQUENCE [LARGE SCALE GENOMIC DNA]</scope>
    <source>
        <strain>ATCC 8739 / DSM 1576 / NBRC 3972 / NCIMB 8545 / WDCM 00012 / Crooks</strain>
    </source>
</reference>
<dbReference type="EMBL" id="CP000946">
    <property type="protein sequence ID" value="ACA77682.1"/>
    <property type="molecule type" value="Genomic_DNA"/>
</dbReference>
<dbReference type="SMR" id="B1IQZ8"/>
<dbReference type="KEGG" id="ecl:EcolC_2038"/>
<dbReference type="HOGENOM" id="CLU_015263_5_2_6"/>
<dbReference type="GO" id="GO:0034707">
    <property type="term" value="C:chloride channel complex"/>
    <property type="evidence" value="ECO:0007669"/>
    <property type="project" value="UniProtKB-KW"/>
</dbReference>
<dbReference type="GO" id="GO:0005886">
    <property type="term" value="C:plasma membrane"/>
    <property type="evidence" value="ECO:0007669"/>
    <property type="project" value="UniProtKB-SubCell"/>
</dbReference>
<dbReference type="GO" id="GO:0005247">
    <property type="term" value="F:voltage-gated chloride channel activity"/>
    <property type="evidence" value="ECO:0007669"/>
    <property type="project" value="UniProtKB-UniRule"/>
</dbReference>
<dbReference type="GO" id="GO:0010447">
    <property type="term" value="P:response to acidic pH"/>
    <property type="evidence" value="ECO:0007669"/>
    <property type="project" value="InterPro"/>
</dbReference>
<dbReference type="CDD" id="cd00400">
    <property type="entry name" value="Voltage_gated_ClC"/>
    <property type="match status" value="1"/>
</dbReference>
<dbReference type="FunFam" id="1.10.3080.10:FF:000010">
    <property type="entry name" value="Voltage-gated ClC-type chloride channel ClcB"/>
    <property type="match status" value="1"/>
</dbReference>
<dbReference type="Gene3D" id="1.10.3080.10">
    <property type="entry name" value="Clc chloride channel"/>
    <property type="match status" value="1"/>
</dbReference>
<dbReference type="HAMAP" id="MF_01203">
    <property type="entry name" value="CLC_ClcB"/>
    <property type="match status" value="1"/>
</dbReference>
<dbReference type="InterPro" id="IPR014743">
    <property type="entry name" value="Cl-channel_core"/>
</dbReference>
<dbReference type="InterPro" id="IPR023790">
    <property type="entry name" value="Cl-channel_volt-gated_ClcB"/>
</dbReference>
<dbReference type="InterPro" id="IPR001807">
    <property type="entry name" value="ClC"/>
</dbReference>
<dbReference type="InterPro" id="IPR050368">
    <property type="entry name" value="ClC-type_chloride_channel"/>
</dbReference>
<dbReference type="NCBIfam" id="NF002437">
    <property type="entry name" value="PRK01610.1"/>
    <property type="match status" value="1"/>
</dbReference>
<dbReference type="PANTHER" id="PTHR43427">
    <property type="entry name" value="CHLORIDE CHANNEL PROTEIN CLC-E"/>
    <property type="match status" value="1"/>
</dbReference>
<dbReference type="PANTHER" id="PTHR43427:SF6">
    <property type="entry name" value="CHLORIDE CHANNEL PROTEIN CLC-E"/>
    <property type="match status" value="1"/>
</dbReference>
<dbReference type="Pfam" id="PF00654">
    <property type="entry name" value="Voltage_CLC"/>
    <property type="match status" value="1"/>
</dbReference>
<dbReference type="PRINTS" id="PR00762">
    <property type="entry name" value="CLCHANNEL"/>
</dbReference>
<dbReference type="SUPFAM" id="SSF81340">
    <property type="entry name" value="Clc chloride channel"/>
    <property type="match status" value="1"/>
</dbReference>
<organism>
    <name type="scientific">Escherichia coli (strain ATCC 8739 / DSM 1576 / NBRC 3972 / NCIMB 8545 / WDCM 00012 / Crooks)</name>
    <dbReference type="NCBI Taxonomy" id="481805"/>
    <lineage>
        <taxon>Bacteria</taxon>
        <taxon>Pseudomonadati</taxon>
        <taxon>Pseudomonadota</taxon>
        <taxon>Gammaproteobacteria</taxon>
        <taxon>Enterobacterales</taxon>
        <taxon>Enterobacteriaceae</taxon>
        <taxon>Escherichia</taxon>
    </lineage>
</organism>
<accession>B1IQZ8</accession>
<evidence type="ECO:0000255" key="1">
    <source>
        <dbReference type="HAMAP-Rule" id="MF_01203"/>
    </source>
</evidence>
<proteinExistence type="inferred from homology"/>